<protein>
    <recommendedName>
        <fullName evidence="1">3-ketoacyl-CoA thiolase</fullName>
        <ecNumber evidence="1">2.3.1.16</ecNumber>
    </recommendedName>
    <alternativeName>
        <fullName evidence="1">Acetyl-CoA acyltransferase</fullName>
    </alternativeName>
    <alternativeName>
        <fullName evidence="1">Beta-ketothiolase</fullName>
    </alternativeName>
    <alternativeName>
        <fullName evidence="1">Fatty acid oxidation complex subunit beta</fullName>
    </alternativeName>
</protein>
<name>FADA_YERPE</name>
<dbReference type="EC" id="2.3.1.16" evidence="1"/>
<dbReference type="EMBL" id="AL590842">
    <property type="protein sequence ID" value="CAL22354.1"/>
    <property type="molecule type" value="Genomic_DNA"/>
</dbReference>
<dbReference type="EMBL" id="AE009952">
    <property type="protein sequence ID" value="AAM84052.1"/>
    <property type="molecule type" value="Genomic_DNA"/>
</dbReference>
<dbReference type="EMBL" id="AE017042">
    <property type="protein sequence ID" value="AAS63448.1"/>
    <property type="molecule type" value="Genomic_DNA"/>
</dbReference>
<dbReference type="PIR" id="AG0458">
    <property type="entry name" value="AG0458"/>
</dbReference>
<dbReference type="RefSeq" id="WP_002211545.1">
    <property type="nucleotide sequence ID" value="NZ_WUCM01000112.1"/>
</dbReference>
<dbReference type="RefSeq" id="YP_002348646.1">
    <property type="nucleotide sequence ID" value="NC_003143.1"/>
</dbReference>
<dbReference type="SMR" id="Q8ZAM9"/>
<dbReference type="STRING" id="214092.YPO3767"/>
<dbReference type="PaxDb" id="214092-YPO3767"/>
<dbReference type="DNASU" id="1145410"/>
<dbReference type="EnsemblBacteria" id="AAS63448">
    <property type="protein sequence ID" value="AAS63448"/>
    <property type="gene ID" value="YP_3281"/>
</dbReference>
<dbReference type="GeneID" id="57974941"/>
<dbReference type="KEGG" id="ype:YPO3767"/>
<dbReference type="KEGG" id="ypk:y0463"/>
<dbReference type="KEGG" id="ypm:YP_3281"/>
<dbReference type="PATRIC" id="fig|214092.21.peg.4289"/>
<dbReference type="eggNOG" id="COG0183">
    <property type="taxonomic scope" value="Bacteria"/>
</dbReference>
<dbReference type="HOGENOM" id="CLU_031026_2_2_6"/>
<dbReference type="OMA" id="RWCASSM"/>
<dbReference type="OrthoDB" id="9764638at2"/>
<dbReference type="UniPathway" id="UPA00659"/>
<dbReference type="Proteomes" id="UP000000815">
    <property type="component" value="Chromosome"/>
</dbReference>
<dbReference type="Proteomes" id="UP000001019">
    <property type="component" value="Chromosome"/>
</dbReference>
<dbReference type="Proteomes" id="UP000002490">
    <property type="component" value="Chromosome"/>
</dbReference>
<dbReference type="GO" id="GO:0005737">
    <property type="term" value="C:cytoplasm"/>
    <property type="evidence" value="ECO:0007669"/>
    <property type="project" value="UniProtKB-SubCell"/>
</dbReference>
<dbReference type="GO" id="GO:0003988">
    <property type="term" value="F:acetyl-CoA C-acyltransferase activity"/>
    <property type="evidence" value="ECO:0000318"/>
    <property type="project" value="GO_Central"/>
</dbReference>
<dbReference type="GO" id="GO:0006635">
    <property type="term" value="P:fatty acid beta-oxidation"/>
    <property type="evidence" value="ECO:0000318"/>
    <property type="project" value="GO_Central"/>
</dbReference>
<dbReference type="GO" id="GO:0010124">
    <property type="term" value="P:phenylacetate catabolic process"/>
    <property type="evidence" value="ECO:0000318"/>
    <property type="project" value="GO_Central"/>
</dbReference>
<dbReference type="CDD" id="cd00751">
    <property type="entry name" value="thiolase"/>
    <property type="match status" value="1"/>
</dbReference>
<dbReference type="FunFam" id="3.40.47.10:FF:000010">
    <property type="entry name" value="Acetyl-CoA acetyltransferase (Thiolase)"/>
    <property type="match status" value="1"/>
</dbReference>
<dbReference type="Gene3D" id="3.40.47.10">
    <property type="match status" value="2"/>
</dbReference>
<dbReference type="HAMAP" id="MF_01620">
    <property type="entry name" value="FadA"/>
    <property type="match status" value="1"/>
</dbReference>
<dbReference type="InterPro" id="IPR012805">
    <property type="entry name" value="FadA"/>
</dbReference>
<dbReference type="InterPro" id="IPR002155">
    <property type="entry name" value="Thiolase"/>
</dbReference>
<dbReference type="InterPro" id="IPR016039">
    <property type="entry name" value="Thiolase-like"/>
</dbReference>
<dbReference type="InterPro" id="IPR050215">
    <property type="entry name" value="Thiolase-like_sf_Thiolase"/>
</dbReference>
<dbReference type="InterPro" id="IPR020615">
    <property type="entry name" value="Thiolase_acyl_enz_int_AS"/>
</dbReference>
<dbReference type="InterPro" id="IPR020610">
    <property type="entry name" value="Thiolase_AS"/>
</dbReference>
<dbReference type="InterPro" id="IPR020617">
    <property type="entry name" value="Thiolase_C"/>
</dbReference>
<dbReference type="InterPro" id="IPR020613">
    <property type="entry name" value="Thiolase_CS"/>
</dbReference>
<dbReference type="InterPro" id="IPR020616">
    <property type="entry name" value="Thiolase_N"/>
</dbReference>
<dbReference type="NCBIfam" id="TIGR01930">
    <property type="entry name" value="AcCoA-C-Actrans"/>
    <property type="match status" value="1"/>
</dbReference>
<dbReference type="NCBIfam" id="TIGR02445">
    <property type="entry name" value="fadA"/>
    <property type="match status" value="1"/>
</dbReference>
<dbReference type="NCBIfam" id="NF006510">
    <property type="entry name" value="PRK08947.1"/>
    <property type="match status" value="1"/>
</dbReference>
<dbReference type="PANTHER" id="PTHR43853:SF11">
    <property type="entry name" value="3-KETOACYL-COA THIOLASE FADA"/>
    <property type="match status" value="1"/>
</dbReference>
<dbReference type="PANTHER" id="PTHR43853">
    <property type="entry name" value="3-KETOACYL-COA THIOLASE, PEROXISOMAL"/>
    <property type="match status" value="1"/>
</dbReference>
<dbReference type="Pfam" id="PF02803">
    <property type="entry name" value="Thiolase_C"/>
    <property type="match status" value="1"/>
</dbReference>
<dbReference type="Pfam" id="PF00108">
    <property type="entry name" value="Thiolase_N"/>
    <property type="match status" value="1"/>
</dbReference>
<dbReference type="PIRSF" id="PIRSF000429">
    <property type="entry name" value="Ac-CoA_Ac_transf"/>
    <property type="match status" value="1"/>
</dbReference>
<dbReference type="SUPFAM" id="SSF53901">
    <property type="entry name" value="Thiolase-like"/>
    <property type="match status" value="2"/>
</dbReference>
<dbReference type="PROSITE" id="PS00098">
    <property type="entry name" value="THIOLASE_1"/>
    <property type="match status" value="1"/>
</dbReference>
<dbReference type="PROSITE" id="PS00737">
    <property type="entry name" value="THIOLASE_2"/>
    <property type="match status" value="1"/>
</dbReference>
<dbReference type="PROSITE" id="PS00099">
    <property type="entry name" value="THIOLASE_3"/>
    <property type="match status" value="1"/>
</dbReference>
<sequence length="387" mass="40917">MENVVIIDAVRTPMGRSKGGAFRHVRAEDLSAHLMRAVISRNPGLNAAEIDDIYWGCVQQTLEQGFNIARNASLLAEIPHSVPAVTVNRLCGSSMQALHDGARAIMVGDAKISLIGGVEHMGHVPMNHGVDFHPGMGRTVAKAAGMMGLTAEMLAKIHNISRQSQDEFAFRSHQRAYAATQAGHFAKEIVATNGHDAEGVLKRFDFDEVIRPETNLSGLAALRPAFDPVNGTVTAGTSSALSDGASAMLIMSESRAKSLGLTPRARIRSMAVVGCDPSIMGYGPVPASQLALKRAGLELADIGLFELNEAFAAQSLACLKGLGLLESMDDKVNLNGGAIALGHPLGCSGARISTTLLNLMERRDVQFGLATMCIGLGQGIATVFERL</sequence>
<gene>
    <name evidence="1" type="primary">fadA</name>
    <name type="ordered locus">YPO3767</name>
    <name type="ordered locus">y0463</name>
    <name type="ordered locus">YP_3281</name>
</gene>
<comment type="function">
    <text evidence="1">Catalyzes the final step of fatty acid oxidation in which acetyl-CoA is released and the CoA ester of a fatty acid two carbons shorter is formed. Involved in the aerobic and anaerobic degradation of long-chain fatty acids (By similarity).</text>
</comment>
<comment type="catalytic activity">
    <reaction evidence="1">
        <text>an acyl-CoA + acetyl-CoA = a 3-oxoacyl-CoA + CoA</text>
        <dbReference type="Rhea" id="RHEA:21564"/>
        <dbReference type="ChEBI" id="CHEBI:57287"/>
        <dbReference type="ChEBI" id="CHEBI:57288"/>
        <dbReference type="ChEBI" id="CHEBI:58342"/>
        <dbReference type="ChEBI" id="CHEBI:90726"/>
        <dbReference type="EC" id="2.3.1.16"/>
    </reaction>
</comment>
<comment type="pathway">
    <text evidence="1">Lipid metabolism; fatty acid beta-oxidation.</text>
</comment>
<comment type="subunit">
    <text evidence="1">Heterotetramer of two alpha chains (FadB) and two beta chains (FadA).</text>
</comment>
<comment type="subcellular location">
    <subcellularLocation>
        <location evidence="1">Cytoplasm</location>
    </subcellularLocation>
</comment>
<comment type="similarity">
    <text evidence="1">Belongs to the thiolase-like superfamily. Thiolase family.</text>
</comment>
<keyword id="KW-0012">Acyltransferase</keyword>
<keyword id="KW-0963">Cytoplasm</keyword>
<keyword id="KW-0276">Fatty acid metabolism</keyword>
<keyword id="KW-0442">Lipid degradation</keyword>
<keyword id="KW-0443">Lipid metabolism</keyword>
<keyword id="KW-1185">Reference proteome</keyword>
<keyword id="KW-0808">Transferase</keyword>
<accession>Q8ZAM9</accession>
<accession>Q0WAP2</accession>
<proteinExistence type="inferred from homology"/>
<organism>
    <name type="scientific">Yersinia pestis</name>
    <dbReference type="NCBI Taxonomy" id="632"/>
    <lineage>
        <taxon>Bacteria</taxon>
        <taxon>Pseudomonadati</taxon>
        <taxon>Pseudomonadota</taxon>
        <taxon>Gammaproteobacteria</taxon>
        <taxon>Enterobacterales</taxon>
        <taxon>Yersiniaceae</taxon>
        <taxon>Yersinia</taxon>
    </lineage>
</organism>
<feature type="chain" id="PRO_0000206400" description="3-ketoacyl-CoA thiolase">
    <location>
        <begin position="1"/>
        <end position="387"/>
    </location>
</feature>
<feature type="active site" description="Acyl-thioester intermediate" evidence="1">
    <location>
        <position position="91"/>
    </location>
</feature>
<feature type="active site" description="Proton acceptor" evidence="1">
    <location>
        <position position="343"/>
    </location>
</feature>
<feature type="active site" description="Proton acceptor" evidence="1">
    <location>
        <position position="373"/>
    </location>
</feature>
<evidence type="ECO:0000255" key="1">
    <source>
        <dbReference type="HAMAP-Rule" id="MF_01620"/>
    </source>
</evidence>
<reference key="1">
    <citation type="journal article" date="2001" name="Nature">
        <title>Genome sequence of Yersinia pestis, the causative agent of plague.</title>
        <authorList>
            <person name="Parkhill J."/>
            <person name="Wren B.W."/>
            <person name="Thomson N.R."/>
            <person name="Titball R.W."/>
            <person name="Holden M.T.G."/>
            <person name="Prentice M.B."/>
            <person name="Sebaihia M."/>
            <person name="James K.D."/>
            <person name="Churcher C.M."/>
            <person name="Mungall K.L."/>
            <person name="Baker S."/>
            <person name="Basham D."/>
            <person name="Bentley S.D."/>
            <person name="Brooks K."/>
            <person name="Cerdeno-Tarraga A.-M."/>
            <person name="Chillingworth T."/>
            <person name="Cronin A."/>
            <person name="Davies R.M."/>
            <person name="Davis P."/>
            <person name="Dougan G."/>
            <person name="Feltwell T."/>
            <person name="Hamlin N."/>
            <person name="Holroyd S."/>
            <person name="Jagels K."/>
            <person name="Karlyshev A.V."/>
            <person name="Leather S."/>
            <person name="Moule S."/>
            <person name="Oyston P.C.F."/>
            <person name="Quail M.A."/>
            <person name="Rutherford K.M."/>
            <person name="Simmonds M."/>
            <person name="Skelton J."/>
            <person name="Stevens K."/>
            <person name="Whitehead S."/>
            <person name="Barrell B.G."/>
        </authorList>
    </citation>
    <scope>NUCLEOTIDE SEQUENCE [LARGE SCALE GENOMIC DNA]</scope>
    <source>
        <strain>CO-92 / Biovar Orientalis</strain>
    </source>
</reference>
<reference key="2">
    <citation type="journal article" date="2002" name="J. Bacteriol.">
        <title>Genome sequence of Yersinia pestis KIM.</title>
        <authorList>
            <person name="Deng W."/>
            <person name="Burland V."/>
            <person name="Plunkett G. III"/>
            <person name="Boutin A."/>
            <person name="Mayhew G.F."/>
            <person name="Liss P."/>
            <person name="Perna N.T."/>
            <person name="Rose D.J."/>
            <person name="Mau B."/>
            <person name="Zhou S."/>
            <person name="Schwartz D.C."/>
            <person name="Fetherston J.D."/>
            <person name="Lindler L.E."/>
            <person name="Brubaker R.R."/>
            <person name="Plano G.V."/>
            <person name="Straley S.C."/>
            <person name="McDonough K.A."/>
            <person name="Nilles M.L."/>
            <person name="Matson J.S."/>
            <person name="Blattner F.R."/>
            <person name="Perry R.D."/>
        </authorList>
    </citation>
    <scope>NUCLEOTIDE SEQUENCE [LARGE SCALE GENOMIC DNA]</scope>
    <source>
        <strain>KIM10+ / Biovar Mediaevalis</strain>
    </source>
</reference>
<reference key="3">
    <citation type="journal article" date="2004" name="DNA Res.">
        <title>Complete genome sequence of Yersinia pestis strain 91001, an isolate avirulent to humans.</title>
        <authorList>
            <person name="Song Y."/>
            <person name="Tong Z."/>
            <person name="Wang J."/>
            <person name="Wang L."/>
            <person name="Guo Z."/>
            <person name="Han Y."/>
            <person name="Zhang J."/>
            <person name="Pei D."/>
            <person name="Zhou D."/>
            <person name="Qin H."/>
            <person name="Pang X."/>
            <person name="Han Y."/>
            <person name="Zhai J."/>
            <person name="Li M."/>
            <person name="Cui B."/>
            <person name="Qi Z."/>
            <person name="Jin L."/>
            <person name="Dai R."/>
            <person name="Chen F."/>
            <person name="Li S."/>
            <person name="Ye C."/>
            <person name="Du Z."/>
            <person name="Lin W."/>
            <person name="Wang J."/>
            <person name="Yu J."/>
            <person name="Yang H."/>
            <person name="Wang J."/>
            <person name="Huang P."/>
            <person name="Yang R."/>
        </authorList>
    </citation>
    <scope>NUCLEOTIDE SEQUENCE [LARGE SCALE GENOMIC DNA]</scope>
    <source>
        <strain>91001 / Biovar Mediaevalis</strain>
    </source>
</reference>